<proteinExistence type="evidence at protein level"/>
<evidence type="ECO:0000255" key="1"/>
<evidence type="ECO:0000255" key="2">
    <source>
        <dbReference type="PROSITE-ProRule" id="PRU00114"/>
    </source>
</evidence>
<evidence type="ECO:0000269" key="3">
    <source>
    </source>
</evidence>
<evidence type="ECO:0000269" key="4">
    <source>
    </source>
</evidence>
<evidence type="ECO:0000269" key="5">
    <source>
    </source>
</evidence>
<evidence type="ECO:0000269" key="6">
    <source>
    </source>
</evidence>
<evidence type="ECO:0000303" key="7">
    <source>
    </source>
</evidence>
<evidence type="ECO:0000303" key="8">
    <source>
    </source>
</evidence>
<evidence type="ECO:0000303" key="9">
    <source>
    </source>
</evidence>
<evidence type="ECO:0000303" key="10">
    <source>
    </source>
</evidence>
<evidence type="ECO:0000303" key="11">
    <source ref="1"/>
</evidence>
<evidence type="ECO:0000305" key="12"/>
<evidence type="ECO:0000305" key="13">
    <source>
    </source>
</evidence>
<evidence type="ECO:0000305" key="14">
    <source>
    </source>
</evidence>
<evidence type="ECO:0000305" key="15">
    <source>
    </source>
</evidence>
<evidence type="ECO:0000305" key="16">
    <source>
    </source>
</evidence>
<evidence type="ECO:0000312" key="17">
    <source>
        <dbReference type="HGNC" id="HGNC:15503"/>
    </source>
</evidence>
<evidence type="ECO:0007744" key="18">
    <source>
    </source>
</evidence>
<feature type="signal peptide" evidence="1">
    <location>
        <begin position="1"/>
        <end position="23"/>
    </location>
</feature>
<feature type="chain" id="PRO_0000014819" description="Leukocyte immunoglobulin-like receptor subfamily A member 4">
    <location>
        <begin position="24"/>
        <end position="499"/>
    </location>
</feature>
<feature type="topological domain" description="Extracellular" evidence="1">
    <location>
        <begin position="24"/>
        <end position="446"/>
    </location>
</feature>
<feature type="transmembrane region" description="Helical" evidence="1">
    <location>
        <begin position="447"/>
        <end position="467"/>
    </location>
</feature>
<feature type="topological domain" description="Cytoplasmic" evidence="1">
    <location>
        <begin position="468"/>
        <end position="499"/>
    </location>
</feature>
<feature type="domain" description="Ig-like C2-type 1">
    <location>
        <begin position="24"/>
        <end position="118"/>
    </location>
</feature>
<feature type="domain" description="Ig-like C2-type 2">
    <location>
        <begin position="123"/>
        <end position="213"/>
    </location>
</feature>
<feature type="domain" description="Ig-like C2-type 3">
    <location>
        <begin position="224"/>
        <end position="313"/>
    </location>
</feature>
<feature type="domain" description="Ig-like C2-type 4">
    <location>
        <begin position="324"/>
        <end position="413"/>
    </location>
</feature>
<feature type="modified residue" description="3'-nitrotyrosine" evidence="18">
    <location>
        <position position="404"/>
    </location>
</feature>
<feature type="glycosylation site" description="N-linked (GlcNAc...) asparagine" evidence="1">
    <location>
        <position position="138"/>
    </location>
</feature>
<feature type="glycosylation site" description="N-linked (GlcNAc...) asparagine" evidence="1">
    <location>
        <position position="239"/>
    </location>
</feature>
<feature type="glycosylation site" description="N-linked (GlcNAc...) asparagine" evidence="1">
    <location>
        <position position="279"/>
    </location>
</feature>
<feature type="glycosylation site" description="N-linked (GlcNAc...) asparagine" evidence="1">
    <location>
        <position position="300"/>
    </location>
</feature>
<feature type="disulfide bond" evidence="2">
    <location>
        <begin position="49"/>
        <end position="98"/>
    </location>
</feature>
<feature type="disulfide bond" evidence="2">
    <location>
        <begin position="143"/>
        <end position="195"/>
    </location>
</feature>
<feature type="disulfide bond" evidence="2">
    <location>
        <begin position="244"/>
        <end position="295"/>
    </location>
</feature>
<feature type="disulfide bond" evidence="2">
    <location>
        <begin position="344"/>
        <end position="395"/>
    </location>
</feature>
<feature type="splice variant" id="VSP_038694" description="In isoform 2." evidence="7">
    <location>
        <begin position="1"/>
        <end position="66"/>
    </location>
</feature>
<feature type="sequence variant" id="VAR_056054" description="In dbSNP:rs2241384.">
    <original>L</original>
    <variation>P</variation>
    <location>
        <position position="27"/>
    </location>
</feature>
<feature type="sequence variant" id="VAR_056055" description="In dbSNP:rs10419832.">
    <original>I</original>
    <variation>V</variation>
    <location>
        <position position="155"/>
    </location>
</feature>
<feature type="sequence conflict" description="In Ref. 1; AAD02203." evidence="12" ref="1">
    <original>L</original>
    <variation>P</variation>
    <location>
        <position position="3"/>
    </location>
</feature>
<feature type="sequence conflict" description="In Ref. 1; AAD02203." evidence="12" ref="1">
    <original>S</original>
    <variation>V</variation>
    <location>
        <position position="7"/>
    </location>
</feature>
<feature type="sequence conflict" description="In Ref. 1; AAD02203." evidence="12" ref="1">
    <original>LFF</original>
    <variation>ICL</variation>
    <location>
        <begin position="9"/>
        <end position="11"/>
    </location>
</feature>
<feature type="sequence conflict" description="In Ref. 4; BI834924." evidence="12" ref="4">
    <original>T</original>
    <variation>N</variation>
    <location>
        <position position="235"/>
    </location>
</feature>
<feature type="sequence conflict" description="In Ref. 1; AAD02203." evidence="12" ref="1">
    <original>S</original>
    <variation>T</variation>
    <location>
        <position position="398"/>
    </location>
</feature>
<sequence>MTLILTSLLFFGLSLGPRTRVQAENLLKPILWAEPGPVITWHNPVTIWCQGTLEAQGYRLDKEGNSMSRHILKTLESENKVKLSIPSMMWEHAGRYHCYYQSPAGWSEPSDPLELVVTAYSRPTLSALPSPVVTSGVNVTLRCASRLGLGRFTLIEEGDHRLSWTLNSHQHNHGKFQALFPMGPLTFSNRGTFRCYGYENNTPYVWSEPSDPLQLLVSGVSRKPSLLTLQGPVVTPGENLTLQCGSDVGYIRYTLYKEGADGLPQRPGRQPQAGLSQANFTLSPVSRSYGGQYRCYGAHNVSSEWSAPSDPLDILIAGQISDRPSLSVQPGPTVTSGEKVTLLCQSWDPMFTFLLTKEGAAHPPLRLRSMYGAHKYQAEFPMSPVTSAHAGTYRCYGSRSSNPYLLSHPSEPLELVVSGATETLNPAQKKSDSKTAPHLQDYTVENLIRMGVAGLVLLFLGILLFEAQHSQRSPPRCSQEANSRKDNAPFRVVEPWEQI</sequence>
<dbReference type="EMBL" id="AF041261">
    <property type="protein sequence ID" value="AAD02203.1"/>
    <property type="molecule type" value="mRNA"/>
</dbReference>
<dbReference type="EMBL" id="AC245884">
    <property type="status" value="NOT_ANNOTATED_CDS"/>
    <property type="molecule type" value="Genomic_DNA"/>
</dbReference>
<dbReference type="EMBL" id="BC109198">
    <property type="protein sequence ID" value="AAI09199.1"/>
    <property type="molecule type" value="mRNA"/>
</dbReference>
<dbReference type="EMBL" id="BI834924">
    <property type="status" value="NOT_ANNOTATED_CDS"/>
    <property type="molecule type" value="mRNA"/>
</dbReference>
<dbReference type="EMBL" id="AF283989">
    <property type="protein sequence ID" value="AAL36993.1"/>
    <property type="molecule type" value="mRNA"/>
</dbReference>
<dbReference type="CCDS" id="CCDS12890.1">
    <molecule id="P59901-1"/>
</dbReference>
<dbReference type="RefSeq" id="NP_036408.4">
    <molecule id="P59901-1"/>
    <property type="nucleotide sequence ID" value="NM_012276.4"/>
</dbReference>
<dbReference type="SMR" id="P59901"/>
<dbReference type="FunCoup" id="P59901">
    <property type="interactions" value="297"/>
</dbReference>
<dbReference type="IntAct" id="P59901">
    <property type="interactions" value="2"/>
</dbReference>
<dbReference type="STRING" id="9606.ENSP00000291759"/>
<dbReference type="ChEMBL" id="CHEMBL4804246"/>
<dbReference type="GlyCosmos" id="P59901">
    <property type="glycosylation" value="4 sites, No reported glycans"/>
</dbReference>
<dbReference type="GlyGen" id="P59901">
    <property type="glycosylation" value="6 sites"/>
</dbReference>
<dbReference type="iPTMnet" id="P59901"/>
<dbReference type="PhosphoSitePlus" id="P59901"/>
<dbReference type="BioMuta" id="LILRA4"/>
<dbReference type="DMDM" id="288558815"/>
<dbReference type="MassIVE" id="P59901"/>
<dbReference type="PaxDb" id="9606-ENSP00000291759"/>
<dbReference type="PeptideAtlas" id="P59901"/>
<dbReference type="TopDownProteomics" id="P59901-1">
    <molecule id="P59901-1"/>
</dbReference>
<dbReference type="ABCD" id="P59901">
    <property type="antibodies" value="3 sequenced antibodies"/>
</dbReference>
<dbReference type="Antibodypedia" id="32892">
    <property type="antibodies" value="303 antibodies from 29 providers"/>
</dbReference>
<dbReference type="DNASU" id="23547"/>
<dbReference type="Ensembl" id="ENST00000291759.5">
    <molecule id="P59901-1"/>
    <property type="protein sequence ID" value="ENSP00000291759.4"/>
    <property type="gene ID" value="ENSG00000239961.3"/>
</dbReference>
<dbReference type="Ensembl" id="ENST00000613813.1">
    <property type="protein sequence ID" value="ENSP00000479979.1"/>
    <property type="gene ID" value="ENSG00000277092.4"/>
</dbReference>
<dbReference type="Ensembl" id="ENST00000616790.1">
    <property type="protein sequence ID" value="ENSP00000483846.1"/>
    <property type="gene ID" value="ENSG00000274185.4"/>
</dbReference>
<dbReference type="Ensembl" id="ENST00000619832.1">
    <property type="protein sequence ID" value="ENSP00000481073.1"/>
    <property type="gene ID" value="ENSG00000276798.4"/>
</dbReference>
<dbReference type="GeneID" id="23547"/>
<dbReference type="KEGG" id="hsa:23547"/>
<dbReference type="MANE-Select" id="ENST00000291759.5">
    <property type="protein sequence ID" value="ENSP00000291759.4"/>
    <property type="RefSeq nucleotide sequence ID" value="NM_012276.5"/>
    <property type="RefSeq protein sequence ID" value="NP_036408.4"/>
</dbReference>
<dbReference type="UCSC" id="uc002qfj.4">
    <molecule id="P59901-1"/>
    <property type="organism name" value="human"/>
</dbReference>
<dbReference type="AGR" id="HGNC:15503"/>
<dbReference type="CTD" id="23547"/>
<dbReference type="DisGeNET" id="23547"/>
<dbReference type="GeneCards" id="LILRA4"/>
<dbReference type="HGNC" id="HGNC:15503">
    <property type="gene designation" value="LILRA4"/>
</dbReference>
<dbReference type="HPA" id="ENSG00000239961">
    <property type="expression patterns" value="Group enriched (brain, lymphoid tissue)"/>
</dbReference>
<dbReference type="MIM" id="607517">
    <property type="type" value="gene"/>
</dbReference>
<dbReference type="neXtProt" id="NX_P59901"/>
<dbReference type="OpenTargets" id="ENSG00000239961"/>
<dbReference type="PharmGKB" id="PA142671546"/>
<dbReference type="VEuPathDB" id="HostDB:ENSG00000239961"/>
<dbReference type="eggNOG" id="ENOG502RYEX">
    <property type="taxonomic scope" value="Eukaryota"/>
</dbReference>
<dbReference type="GeneTree" id="ENSGT01100000263478"/>
<dbReference type="HOGENOM" id="CLU_021100_2_0_1"/>
<dbReference type="InParanoid" id="P59901"/>
<dbReference type="OMA" id="FENNTPY"/>
<dbReference type="OrthoDB" id="9427497at2759"/>
<dbReference type="PAN-GO" id="P59901">
    <property type="GO annotations" value="3 GO annotations based on evolutionary models"/>
</dbReference>
<dbReference type="PhylomeDB" id="P59901"/>
<dbReference type="TreeFam" id="TF336644"/>
<dbReference type="PathwayCommons" id="P59901"/>
<dbReference type="Reactome" id="R-HSA-198933">
    <property type="pathway name" value="Immunoregulatory interactions between a Lymphoid and a non-Lymphoid cell"/>
</dbReference>
<dbReference type="SignaLink" id="P59901"/>
<dbReference type="BioGRID-ORCS" id="23547">
    <property type="hits" value="12 hits in 1132 CRISPR screens"/>
</dbReference>
<dbReference type="GeneWiki" id="LILRA4"/>
<dbReference type="GenomeRNAi" id="23547"/>
<dbReference type="Pharos" id="P59901">
    <property type="development level" value="Tbio"/>
</dbReference>
<dbReference type="PRO" id="PR:P59901"/>
<dbReference type="Proteomes" id="UP000005640">
    <property type="component" value="Chromosome 19"/>
</dbReference>
<dbReference type="RNAct" id="P59901">
    <property type="molecule type" value="protein"/>
</dbReference>
<dbReference type="Bgee" id="ENSG00000239961">
    <property type="expression patterns" value="Expressed in granulocyte and 89 other cell types or tissues"/>
</dbReference>
<dbReference type="ExpressionAtlas" id="P59901">
    <property type="expression patterns" value="baseline and differential"/>
</dbReference>
<dbReference type="GO" id="GO:0032998">
    <property type="term" value="C:Fc-epsilon receptor I complex"/>
    <property type="evidence" value="ECO:0000314"/>
    <property type="project" value="UniProtKB"/>
</dbReference>
<dbReference type="GO" id="GO:0005886">
    <property type="term" value="C:plasma membrane"/>
    <property type="evidence" value="ECO:0000314"/>
    <property type="project" value="UniProtKB"/>
</dbReference>
<dbReference type="GO" id="GO:0015026">
    <property type="term" value="F:coreceptor activity"/>
    <property type="evidence" value="ECO:0000314"/>
    <property type="project" value="UniProtKB"/>
</dbReference>
<dbReference type="GO" id="GO:0032396">
    <property type="term" value="F:inhibitory MHC class I receptor activity"/>
    <property type="evidence" value="ECO:0000318"/>
    <property type="project" value="GO_Central"/>
</dbReference>
<dbReference type="GO" id="GO:0005102">
    <property type="term" value="F:signaling receptor binding"/>
    <property type="evidence" value="ECO:0000353"/>
    <property type="project" value="UniProtKB"/>
</dbReference>
<dbReference type="GO" id="GO:0019221">
    <property type="term" value="P:cytokine-mediated signaling pathway"/>
    <property type="evidence" value="ECO:0000318"/>
    <property type="project" value="GO_Central"/>
</dbReference>
<dbReference type="GO" id="GO:0038095">
    <property type="term" value="P:Fc-epsilon receptor signaling pathway"/>
    <property type="evidence" value="ECO:0000315"/>
    <property type="project" value="UniProtKB"/>
</dbReference>
<dbReference type="GO" id="GO:0002764">
    <property type="term" value="P:immune response-regulating signaling pathway"/>
    <property type="evidence" value="ECO:0000318"/>
    <property type="project" value="GO_Central"/>
</dbReference>
<dbReference type="GO" id="GO:0045087">
    <property type="term" value="P:innate immune response"/>
    <property type="evidence" value="ECO:0007669"/>
    <property type="project" value="UniProtKB-KW"/>
</dbReference>
<dbReference type="GO" id="GO:0032687">
    <property type="term" value="P:negative regulation of interferon-alpha production"/>
    <property type="evidence" value="ECO:0000315"/>
    <property type="project" value="UniProtKB"/>
</dbReference>
<dbReference type="GO" id="GO:0034156">
    <property type="term" value="P:negative regulation of toll-like receptor 7 signaling pathway"/>
    <property type="evidence" value="ECO:0000315"/>
    <property type="project" value="UniProtKB"/>
</dbReference>
<dbReference type="GO" id="GO:0034164">
    <property type="term" value="P:negative regulation of toll-like receptor 9 signaling pathway"/>
    <property type="evidence" value="ECO:0000315"/>
    <property type="project" value="UniProtKB"/>
</dbReference>
<dbReference type="GO" id="GO:0032720">
    <property type="term" value="P:negative regulation of tumor necrosis factor production"/>
    <property type="evidence" value="ECO:0000315"/>
    <property type="project" value="UniProtKB"/>
</dbReference>
<dbReference type="CDD" id="cd05751">
    <property type="entry name" value="IgC2_D1_LILR_KIR_like"/>
    <property type="match status" value="1"/>
</dbReference>
<dbReference type="FunFam" id="2.60.40.10:FF:000049">
    <property type="entry name" value="Leukocyte immunoglobulin-like receptor subfamily B member 1"/>
    <property type="match status" value="4"/>
</dbReference>
<dbReference type="Gene3D" id="2.60.40.10">
    <property type="entry name" value="Immunoglobulins"/>
    <property type="match status" value="4"/>
</dbReference>
<dbReference type="InterPro" id="IPR016332">
    <property type="entry name" value="A1B_glyco/leuk_Ig-like_rcpt"/>
</dbReference>
<dbReference type="InterPro" id="IPR007110">
    <property type="entry name" value="Ig-like_dom"/>
</dbReference>
<dbReference type="InterPro" id="IPR036179">
    <property type="entry name" value="Ig-like_dom_sf"/>
</dbReference>
<dbReference type="InterPro" id="IPR013783">
    <property type="entry name" value="Ig-like_fold"/>
</dbReference>
<dbReference type="InterPro" id="IPR050412">
    <property type="entry name" value="Ig-like_Receptors_ImmuneReg"/>
</dbReference>
<dbReference type="InterPro" id="IPR003599">
    <property type="entry name" value="Ig_sub"/>
</dbReference>
<dbReference type="InterPro" id="IPR003598">
    <property type="entry name" value="Ig_sub2"/>
</dbReference>
<dbReference type="InterPro" id="IPR013151">
    <property type="entry name" value="Immunoglobulin_dom"/>
</dbReference>
<dbReference type="PANTHER" id="PTHR11738:SF98">
    <property type="entry name" value="LEUKOCYTE IMMUNOGLOBULIN-LIKE RECEPTOR SUBFAMILY A MEMBER 4"/>
    <property type="match status" value="1"/>
</dbReference>
<dbReference type="PANTHER" id="PTHR11738">
    <property type="entry name" value="MHC CLASS I NK CELL RECEPTOR"/>
    <property type="match status" value="1"/>
</dbReference>
<dbReference type="Pfam" id="PF00047">
    <property type="entry name" value="ig"/>
    <property type="match status" value="2"/>
</dbReference>
<dbReference type="Pfam" id="PF13895">
    <property type="entry name" value="Ig_2"/>
    <property type="match status" value="1"/>
</dbReference>
<dbReference type="Pfam" id="PF13927">
    <property type="entry name" value="Ig_3"/>
    <property type="match status" value="1"/>
</dbReference>
<dbReference type="PIRSF" id="PIRSF001979">
    <property type="entry name" value="Alpha_1B_glycoprot_prd"/>
    <property type="match status" value="1"/>
</dbReference>
<dbReference type="SMART" id="SM00409">
    <property type="entry name" value="IG"/>
    <property type="match status" value="4"/>
</dbReference>
<dbReference type="SMART" id="SM00408">
    <property type="entry name" value="IGc2"/>
    <property type="match status" value="3"/>
</dbReference>
<dbReference type="SUPFAM" id="SSF48726">
    <property type="entry name" value="Immunoglobulin"/>
    <property type="match status" value="4"/>
</dbReference>
<dbReference type="PROSITE" id="PS50835">
    <property type="entry name" value="IG_LIKE"/>
    <property type="match status" value="3"/>
</dbReference>
<reference key="1">
    <citation type="submission" date="1998-01" db="EMBL/GenBank/DDBJ databases">
        <title>Immunoglobulin-like transcript 7.</title>
        <authorList>
            <person name="Colonna M."/>
        </authorList>
    </citation>
    <scope>NUCLEOTIDE SEQUENCE [MRNA] (ISOFORM 1)</scope>
</reference>
<reference key="2">
    <citation type="journal article" date="2004" name="Nature">
        <title>The DNA sequence and biology of human chromosome 19.</title>
        <authorList>
            <person name="Grimwood J."/>
            <person name="Gordon L.A."/>
            <person name="Olsen A.S."/>
            <person name="Terry A."/>
            <person name="Schmutz J."/>
            <person name="Lamerdin J.E."/>
            <person name="Hellsten U."/>
            <person name="Goodstein D."/>
            <person name="Couronne O."/>
            <person name="Tran-Gyamfi M."/>
            <person name="Aerts A."/>
            <person name="Altherr M."/>
            <person name="Ashworth L."/>
            <person name="Bajorek E."/>
            <person name="Black S."/>
            <person name="Branscomb E."/>
            <person name="Caenepeel S."/>
            <person name="Carrano A.V."/>
            <person name="Caoile C."/>
            <person name="Chan Y.M."/>
            <person name="Christensen M."/>
            <person name="Cleland C.A."/>
            <person name="Copeland A."/>
            <person name="Dalin E."/>
            <person name="Dehal P."/>
            <person name="Denys M."/>
            <person name="Detter J.C."/>
            <person name="Escobar J."/>
            <person name="Flowers D."/>
            <person name="Fotopulos D."/>
            <person name="Garcia C."/>
            <person name="Georgescu A.M."/>
            <person name="Glavina T."/>
            <person name="Gomez M."/>
            <person name="Gonzales E."/>
            <person name="Groza M."/>
            <person name="Hammon N."/>
            <person name="Hawkins T."/>
            <person name="Haydu L."/>
            <person name="Ho I."/>
            <person name="Huang W."/>
            <person name="Israni S."/>
            <person name="Jett J."/>
            <person name="Kadner K."/>
            <person name="Kimball H."/>
            <person name="Kobayashi A."/>
            <person name="Larionov V."/>
            <person name="Leem S.-H."/>
            <person name="Lopez F."/>
            <person name="Lou Y."/>
            <person name="Lowry S."/>
            <person name="Malfatti S."/>
            <person name="Martinez D."/>
            <person name="McCready P.M."/>
            <person name="Medina C."/>
            <person name="Morgan J."/>
            <person name="Nelson K."/>
            <person name="Nolan M."/>
            <person name="Ovcharenko I."/>
            <person name="Pitluck S."/>
            <person name="Pollard M."/>
            <person name="Popkie A.P."/>
            <person name="Predki P."/>
            <person name="Quan G."/>
            <person name="Ramirez L."/>
            <person name="Rash S."/>
            <person name="Retterer J."/>
            <person name="Rodriguez A."/>
            <person name="Rogers S."/>
            <person name="Salamov A."/>
            <person name="Salazar A."/>
            <person name="She X."/>
            <person name="Smith D."/>
            <person name="Slezak T."/>
            <person name="Solovyev V."/>
            <person name="Thayer N."/>
            <person name="Tice H."/>
            <person name="Tsai M."/>
            <person name="Ustaszewska A."/>
            <person name="Vo N."/>
            <person name="Wagner M."/>
            <person name="Wheeler J."/>
            <person name="Wu K."/>
            <person name="Xie G."/>
            <person name="Yang J."/>
            <person name="Dubchak I."/>
            <person name="Furey T.S."/>
            <person name="DeJong P."/>
            <person name="Dickson M."/>
            <person name="Gordon D."/>
            <person name="Eichler E.E."/>
            <person name="Pennacchio L.A."/>
            <person name="Richardson P."/>
            <person name="Stubbs L."/>
            <person name="Rokhsar D.S."/>
            <person name="Myers R.M."/>
            <person name="Rubin E.M."/>
            <person name="Lucas S.M."/>
        </authorList>
    </citation>
    <scope>NUCLEOTIDE SEQUENCE [LARGE SCALE GENOMIC DNA]</scope>
</reference>
<reference key="3">
    <citation type="journal article" date="2004" name="Genome Res.">
        <title>The status, quality, and expansion of the NIH full-length cDNA project: the Mammalian Gene Collection (MGC).</title>
        <authorList>
            <consortium name="The MGC Project Team"/>
        </authorList>
    </citation>
    <scope>NUCLEOTIDE SEQUENCE [LARGE SCALE MRNA] (ISOFORM 2)</scope>
    <scope>NUCLEOTIDE SEQUENCE [LARGE SCALE MRNA] OF 1-235 (ISOFORM 1)</scope>
    <source>
        <tissue>Pancreas</tissue>
        <tissue>Spleen</tissue>
    </source>
</reference>
<reference key="4">
    <citation type="submission" date="2000-07" db="EMBL/GenBank/DDBJ databases">
        <authorList>
            <person name="Canavez F.C."/>
        </authorList>
    </citation>
    <scope>NUCLEOTIDE SEQUENCE [MRNA] OF 35-494 (ISOFORM 1)</scope>
</reference>
<reference key="5">
    <citation type="journal article" date="2006" name="Anal. Biochem.">
        <title>Nitroproteins from a human pituitary adenoma tissue discovered with a nitrotyrosine affinity column and tandem mass spectrometry.</title>
        <authorList>
            <person name="Zhan X."/>
            <person name="Desiderio D.M."/>
        </authorList>
    </citation>
    <scope>NITRATION [LARGE SCALE ANALYSIS] AT TYR-404</scope>
    <scope>IDENTIFICATION BY MASS SPECTROMETRY [LARGE SCALE ANALYSIS]</scope>
    <source>
        <tissue>Pituitary adenoma</tissue>
    </source>
</reference>
<reference key="6">
    <citation type="journal article" date="2006" name="J. Exp. Med.">
        <title>Plasmacytoid dendritic cell-specific receptor ILT7-Fc epsilonRI gamma inhibits Toll-like receptor-induced interferon production.</title>
        <authorList>
            <person name="Cao W."/>
            <person name="Rosen D.B."/>
            <person name="Ito T."/>
            <person name="Bover L."/>
            <person name="Bao M."/>
            <person name="Watanabe G."/>
            <person name="Yao Z."/>
            <person name="Zhang L."/>
            <person name="Lanier L.L."/>
            <person name="Liu Y.J."/>
        </authorList>
    </citation>
    <scope>FUNCTION</scope>
    <scope>INTERACTION WITH FCER1G</scope>
    <scope>SUBCELLULAR LOCATION</scope>
    <scope>TISSUE SPECIFICITY</scope>
</reference>
<reference key="7">
    <citation type="journal article" date="2009" name="J. Exp. Med.">
        <title>Regulation of TLR7/9 responses in plasmacytoid dendritic cells by BST2 and ILT7 receptor interaction.</title>
        <authorList>
            <person name="Cao W."/>
            <person name="Bover L."/>
            <person name="Cho M."/>
            <person name="Wen X."/>
            <person name="Hanabuchi S."/>
            <person name="Bao M."/>
            <person name="Rosen D.B."/>
            <person name="Wang Y.H."/>
            <person name="Shaw J.L."/>
            <person name="Du Q."/>
            <person name="Li C."/>
            <person name="Arai N."/>
            <person name="Yao Z."/>
            <person name="Lanier L.L."/>
            <person name="Liu Y.J."/>
        </authorList>
    </citation>
    <scope>FUNCTION</scope>
    <scope>INTERACTION WITH BST2</scope>
    <scope>SUBCELLULAR LOCATION</scope>
</reference>
<reference key="8">
    <citation type="journal article" date="2014" name="PLoS ONE">
        <title>Effect of immunoglobin-like transcript 7 cross-linking on plasmacytoid dendritic cells differentiation into antigen-presenting cells.</title>
        <authorList>
            <person name="Tavano B."/>
            <person name="Boasso A."/>
        </authorList>
    </citation>
    <scope>FUNCTION</scope>
    <scope>SUBCELLULAR LOCATION</scope>
</reference>
<reference key="9">
    <citation type="journal article" date="2015" name="PLoS Pathog.">
        <title>Vpu exploits the cross-talk between BST2 and the ILT7 receptor to suppress anti-HIV-1 responses by plasmacytoid dendritic Cells.</title>
        <authorList>
            <person name="Bego M.G."/>
            <person name="Cote E."/>
            <person name="Aschman N."/>
            <person name="Mercier J."/>
            <person name="Weissenhorn W."/>
            <person name="Cohen E.A."/>
        </authorList>
    </citation>
    <scope>FUNCTION</scope>
    <scope>SUBCELLULAR LOCATION</scope>
    <scope>INTERACTION WITH BST2</scope>
</reference>
<comment type="function">
    <text evidence="3 4 5 6">Functions coreceptor to limit the innate immune responses to viral infections; signaling occurs via FCER1G (PubMed:16735691, PubMed:19564354). Down-regulates the production of IFNA1, IFNA2, IFNA4, IFNB1 and TNF by plasmacytoid dendritic cells that have been exposed to influenza virus or cytidine-phosphate-guanosine (CpG) dinucleotides, indicating it functions as a negative regulator of TLR7 and TLR9 signaling cascades (PubMed:16735691, PubMed:19564354, PubMed:24586760). Down-regulates interferon production in response to interaction with BST2 on HIV-1 infected cells (PubMed:26172439). Activates a signaling cascade in complex with FCER1G that results in phosphorylation of Src family and Syk kinases and thereby triggers mobilization of intracellular Ca(2+) (PubMed:16735691, PubMed:19564354). Does not interfere with the differentiation of plasmacytoid dendritic cells into antigen-presenting cells (PubMed:24586760).</text>
</comment>
<comment type="subunit">
    <text evidence="3 4 6">Interacts with FCER1G; this stabilizes the expression of both proteins at the cell membrane (PubMed:16735691). Interacts with BST2; leads to activation of LILRA4-mediated signaling and down-regulation of the innate immune response to viral pathogens (PubMed:19564354, PubMed:26172439).</text>
</comment>
<comment type="interaction">
    <interactant intactId="EBI-2841591">
        <id>P59901</id>
    </interactant>
    <interactant intactId="EBI-2476339">
        <id>Q10589</id>
        <label>BST2</label>
    </interactant>
    <organismsDiffer>false</organismsDiffer>
    <experiments>2</experiments>
</comment>
<comment type="subcellular location">
    <subcellularLocation>
        <location evidence="3 4 5 6">Cell membrane</location>
        <topology evidence="13 14 15 16">Single-pass type I membrane protein</topology>
    </subcellularLocation>
</comment>
<comment type="alternative products">
    <event type="alternative splicing"/>
    <isoform>
        <id>P59901-1</id>
        <name>1</name>
        <sequence type="displayed"/>
    </isoform>
    <isoform>
        <id>P59901-2</id>
        <name>2</name>
        <sequence type="described" ref="VSP_038694"/>
    </isoform>
</comment>
<comment type="tissue specificity">
    <text evidence="3">Detected on plasmacytoid dendritic cells (at protein level). Detected on plasmacytoid dendritic cells, but not on monocytes or B cells.</text>
</comment>
<organism>
    <name type="scientific">Homo sapiens</name>
    <name type="common">Human</name>
    <dbReference type="NCBI Taxonomy" id="9606"/>
    <lineage>
        <taxon>Eukaryota</taxon>
        <taxon>Metazoa</taxon>
        <taxon>Chordata</taxon>
        <taxon>Craniata</taxon>
        <taxon>Vertebrata</taxon>
        <taxon>Euteleostomi</taxon>
        <taxon>Mammalia</taxon>
        <taxon>Eutheria</taxon>
        <taxon>Euarchontoglires</taxon>
        <taxon>Primates</taxon>
        <taxon>Haplorrhini</taxon>
        <taxon>Catarrhini</taxon>
        <taxon>Hominidae</taxon>
        <taxon>Homo</taxon>
    </lineage>
</organism>
<accession>P59901</accession>
<accession>Q32MC4</accession>
<protein>
    <recommendedName>
        <fullName evidence="12">Leukocyte immunoglobulin-like receptor subfamily A member 4</fullName>
    </recommendedName>
    <alternativeName>
        <fullName>CD85 antigen-like family member G</fullName>
    </alternativeName>
    <alternativeName>
        <fullName evidence="10 11">Immunoglobulin-like transcript 7</fullName>
        <shortName evidence="8 10">ILT-7</shortName>
    </alternativeName>
    <cdAntigenName>CD85g</cdAntigenName>
</protein>
<keyword id="KW-0025">Alternative splicing</keyword>
<keyword id="KW-1003">Cell membrane</keyword>
<keyword id="KW-1015">Disulfide bond</keyword>
<keyword id="KW-0325">Glycoprotein</keyword>
<keyword id="KW-0391">Immunity</keyword>
<keyword id="KW-0393">Immunoglobulin domain</keyword>
<keyword id="KW-0399">Innate immunity</keyword>
<keyword id="KW-0472">Membrane</keyword>
<keyword id="KW-0944">Nitration</keyword>
<keyword id="KW-1267">Proteomics identification</keyword>
<keyword id="KW-0675">Receptor</keyword>
<keyword id="KW-1185">Reference proteome</keyword>
<keyword id="KW-0677">Repeat</keyword>
<keyword id="KW-0732">Signal</keyword>
<keyword id="KW-0812">Transmembrane</keyword>
<keyword id="KW-1133">Transmembrane helix</keyword>
<gene>
    <name evidence="17" type="primary">LILRA4</name>
    <name evidence="8 9 10" type="synonym">ILT7</name>
</gene>
<name>LIRA4_HUMAN</name>